<name>TORD_PASMU</name>
<dbReference type="EMBL" id="AE004439">
    <property type="protein sequence ID" value="AAK03878.1"/>
    <property type="molecule type" value="Genomic_DNA"/>
</dbReference>
<dbReference type="SMR" id="Q9CK40"/>
<dbReference type="STRING" id="272843.PM1794"/>
<dbReference type="EnsemblBacteria" id="AAK03878">
    <property type="protein sequence ID" value="AAK03878"/>
    <property type="gene ID" value="PM1794"/>
</dbReference>
<dbReference type="KEGG" id="pmu:PM1794"/>
<dbReference type="HOGENOM" id="CLU_077650_4_0_6"/>
<dbReference type="Proteomes" id="UP000000809">
    <property type="component" value="Chromosome"/>
</dbReference>
<dbReference type="GO" id="GO:0005737">
    <property type="term" value="C:cytoplasm"/>
    <property type="evidence" value="ECO:0007669"/>
    <property type="project" value="UniProtKB-SubCell"/>
</dbReference>
<dbReference type="GO" id="GO:0051259">
    <property type="term" value="P:protein complex oligomerization"/>
    <property type="evidence" value="ECO:0007669"/>
    <property type="project" value="InterPro"/>
</dbReference>
<dbReference type="GO" id="GO:0006457">
    <property type="term" value="P:protein folding"/>
    <property type="evidence" value="ECO:0007669"/>
    <property type="project" value="UniProtKB-UniRule"/>
</dbReference>
<dbReference type="Gene3D" id="1.20.120.1820">
    <property type="match status" value="1"/>
</dbReference>
<dbReference type="Gene3D" id="1.20.1280.20">
    <property type="entry name" value="HscB, C-terminal domain"/>
    <property type="match status" value="1"/>
</dbReference>
<dbReference type="HAMAP" id="MF_01150">
    <property type="entry name" value="TorD"/>
    <property type="match status" value="1"/>
</dbReference>
<dbReference type="InterPro" id="IPR023069">
    <property type="entry name" value="Chaperone_TorD"/>
</dbReference>
<dbReference type="InterPro" id="IPR020945">
    <property type="entry name" value="DMSO/NO3_reduct_chaperone"/>
</dbReference>
<dbReference type="InterPro" id="IPR036386">
    <property type="entry name" value="HscB_C_sf"/>
</dbReference>
<dbReference type="InterPro" id="IPR036411">
    <property type="entry name" value="TorD-like_sf"/>
</dbReference>
<dbReference type="InterPro" id="IPR050289">
    <property type="entry name" value="TorD/DmsD_chaperones"/>
</dbReference>
<dbReference type="NCBIfam" id="NF003442">
    <property type="entry name" value="PRK04976.1"/>
    <property type="match status" value="1"/>
</dbReference>
<dbReference type="PANTHER" id="PTHR34227:SF11">
    <property type="entry name" value="CHAPERONE PROTEIN TORD"/>
    <property type="match status" value="1"/>
</dbReference>
<dbReference type="PANTHER" id="PTHR34227">
    <property type="entry name" value="CHAPERONE PROTEIN YCDY"/>
    <property type="match status" value="1"/>
</dbReference>
<dbReference type="Pfam" id="PF02613">
    <property type="entry name" value="Nitrate_red_del"/>
    <property type="match status" value="1"/>
</dbReference>
<dbReference type="SUPFAM" id="SSF89155">
    <property type="entry name" value="TorD-like"/>
    <property type="match status" value="1"/>
</dbReference>
<gene>
    <name evidence="1" type="primary">torD</name>
    <name type="ordered locus">PM1794</name>
</gene>
<accession>Q9CK40</accession>
<proteinExistence type="inferred from homology"/>
<sequence length="196" mass="22828">MMPFSREERQFVYTWLSNMLGHELSASQLAQYQQGLFDDFFAFLTEQGFQAQVEGIQQQLQQLKTVELAHLELAADYTQLFLLDGSSSALPYASVYLPEAQLTCHFTFLEALLVRFQLQLNRDKPEPSDHLCVYLELLRQLAEVDDMKTYRQLIQDALLPWLLPFNDKVQRVKTRTTFYQQVVVLLILLLQADCQN</sequence>
<reference key="1">
    <citation type="journal article" date="2001" name="Proc. Natl. Acad. Sci. U.S.A.">
        <title>Complete genomic sequence of Pasteurella multocida Pm70.</title>
        <authorList>
            <person name="May B.J."/>
            <person name="Zhang Q."/>
            <person name="Li L.L."/>
            <person name="Paustian M.L."/>
            <person name="Whittam T.S."/>
            <person name="Kapur V."/>
        </authorList>
    </citation>
    <scope>NUCLEOTIDE SEQUENCE [LARGE SCALE GENOMIC DNA]</scope>
    <source>
        <strain>Pm70</strain>
    </source>
</reference>
<keyword id="KW-0143">Chaperone</keyword>
<keyword id="KW-0963">Cytoplasm</keyword>
<keyword id="KW-1185">Reference proteome</keyword>
<comment type="function">
    <text evidence="1">Involved in the biogenesis of TorA. Acts on TorA before the insertion of the molybdenum cofactor and, as a result, probably favors a conformation of the apoenzyme that is competent for acquiring the cofactor.</text>
</comment>
<comment type="subcellular location">
    <subcellularLocation>
        <location evidence="1">Cytoplasm</location>
    </subcellularLocation>
</comment>
<comment type="similarity">
    <text evidence="1">Belongs to the TorD/DmsD family. TorD subfamily.</text>
</comment>
<feature type="chain" id="PRO_0000211637" description="Chaperone protein TorD">
    <location>
        <begin position="1"/>
        <end position="196"/>
    </location>
</feature>
<organism>
    <name type="scientific">Pasteurella multocida (strain Pm70)</name>
    <dbReference type="NCBI Taxonomy" id="272843"/>
    <lineage>
        <taxon>Bacteria</taxon>
        <taxon>Pseudomonadati</taxon>
        <taxon>Pseudomonadota</taxon>
        <taxon>Gammaproteobacteria</taxon>
        <taxon>Pasteurellales</taxon>
        <taxon>Pasteurellaceae</taxon>
        <taxon>Pasteurella</taxon>
    </lineage>
</organism>
<protein>
    <recommendedName>
        <fullName evidence="1">Chaperone protein TorD</fullName>
    </recommendedName>
</protein>
<evidence type="ECO:0000255" key="1">
    <source>
        <dbReference type="HAMAP-Rule" id="MF_01150"/>
    </source>
</evidence>